<evidence type="ECO:0000250" key="1"/>
<evidence type="ECO:0000255" key="2">
    <source>
        <dbReference type="HAMAP-Rule" id="MF_00402"/>
    </source>
</evidence>
<evidence type="ECO:0000305" key="3"/>
<proteinExistence type="inferred from homology"/>
<accession>Q5PFF9</accession>
<organism>
    <name type="scientific">Salmonella paratyphi A (strain ATCC 9150 / SARB42)</name>
    <dbReference type="NCBI Taxonomy" id="295319"/>
    <lineage>
        <taxon>Bacteria</taxon>
        <taxon>Pseudomonadati</taxon>
        <taxon>Pseudomonadota</taxon>
        <taxon>Gammaproteobacteria</taxon>
        <taxon>Enterobacterales</taxon>
        <taxon>Enterobacteriaceae</taxon>
        <taxon>Salmonella</taxon>
    </lineage>
</organism>
<dbReference type="EMBL" id="CP000026">
    <property type="protein sequence ID" value="AAV78401.1"/>
    <property type="molecule type" value="Genomic_DNA"/>
</dbReference>
<dbReference type="RefSeq" id="WP_000065257.1">
    <property type="nucleotide sequence ID" value="NC_006511.1"/>
</dbReference>
<dbReference type="SMR" id="Q5PFF9"/>
<dbReference type="KEGG" id="spt:SPA2532"/>
<dbReference type="HOGENOM" id="CLU_103507_2_1_6"/>
<dbReference type="Proteomes" id="UP000008185">
    <property type="component" value="Chromosome"/>
</dbReference>
<dbReference type="GO" id="GO:0022625">
    <property type="term" value="C:cytosolic large ribosomal subunit"/>
    <property type="evidence" value="ECO:0007669"/>
    <property type="project" value="TreeGrafter"/>
</dbReference>
<dbReference type="GO" id="GO:0003735">
    <property type="term" value="F:structural constituent of ribosome"/>
    <property type="evidence" value="ECO:0007669"/>
    <property type="project" value="InterPro"/>
</dbReference>
<dbReference type="GO" id="GO:0006412">
    <property type="term" value="P:translation"/>
    <property type="evidence" value="ECO:0007669"/>
    <property type="project" value="UniProtKB-UniRule"/>
</dbReference>
<dbReference type="FunFam" id="2.30.30.790:FF:000001">
    <property type="entry name" value="50S ribosomal protein L19"/>
    <property type="match status" value="1"/>
</dbReference>
<dbReference type="Gene3D" id="2.30.30.790">
    <property type="match status" value="1"/>
</dbReference>
<dbReference type="HAMAP" id="MF_00402">
    <property type="entry name" value="Ribosomal_bL19"/>
    <property type="match status" value="1"/>
</dbReference>
<dbReference type="InterPro" id="IPR001857">
    <property type="entry name" value="Ribosomal_bL19"/>
</dbReference>
<dbReference type="InterPro" id="IPR018257">
    <property type="entry name" value="Ribosomal_bL19_CS"/>
</dbReference>
<dbReference type="InterPro" id="IPR038657">
    <property type="entry name" value="Ribosomal_bL19_sf"/>
</dbReference>
<dbReference type="InterPro" id="IPR008991">
    <property type="entry name" value="Translation_prot_SH3-like_sf"/>
</dbReference>
<dbReference type="NCBIfam" id="TIGR01024">
    <property type="entry name" value="rplS_bact"/>
    <property type="match status" value="1"/>
</dbReference>
<dbReference type="PANTHER" id="PTHR15680:SF9">
    <property type="entry name" value="LARGE RIBOSOMAL SUBUNIT PROTEIN BL19M"/>
    <property type="match status" value="1"/>
</dbReference>
<dbReference type="PANTHER" id="PTHR15680">
    <property type="entry name" value="RIBOSOMAL PROTEIN L19"/>
    <property type="match status" value="1"/>
</dbReference>
<dbReference type="Pfam" id="PF01245">
    <property type="entry name" value="Ribosomal_L19"/>
    <property type="match status" value="1"/>
</dbReference>
<dbReference type="PIRSF" id="PIRSF002191">
    <property type="entry name" value="Ribosomal_L19"/>
    <property type="match status" value="1"/>
</dbReference>
<dbReference type="PRINTS" id="PR00061">
    <property type="entry name" value="RIBOSOMALL19"/>
</dbReference>
<dbReference type="SUPFAM" id="SSF50104">
    <property type="entry name" value="Translation proteins SH3-like domain"/>
    <property type="match status" value="1"/>
</dbReference>
<dbReference type="PROSITE" id="PS01015">
    <property type="entry name" value="RIBOSOMAL_L19"/>
    <property type="match status" value="1"/>
</dbReference>
<feature type="initiator methionine" description="Removed" evidence="1">
    <location>
        <position position="1"/>
    </location>
</feature>
<feature type="chain" id="PRO_0000163521" description="Large ribosomal subunit protein bL19">
    <location>
        <begin position="2"/>
        <end position="115"/>
    </location>
</feature>
<name>RL19_SALPA</name>
<protein>
    <recommendedName>
        <fullName evidence="2">Large ribosomal subunit protein bL19</fullName>
    </recommendedName>
    <alternativeName>
        <fullName evidence="3">50S ribosomal protein L19</fullName>
    </alternativeName>
</protein>
<sequence length="115" mass="13130">MSNIIKQLEQEQMKQNVPSFRPGDTVEVKVWVVEGTKKRLQAFEGVVIAIRNRGLHSAFTVRKISNGEGVERVFQTHSPVVDSIAVKRRGAVRKAKLYYLRERTGKAARIKERLN</sequence>
<comment type="function">
    <text evidence="2">This protein is located at the 30S-50S ribosomal subunit interface and may play a role in the structure and function of the aminoacyl-tRNA binding site.</text>
</comment>
<comment type="similarity">
    <text evidence="2">Belongs to the bacterial ribosomal protein bL19 family.</text>
</comment>
<reference key="1">
    <citation type="journal article" date="2004" name="Nat. Genet.">
        <title>Comparison of genome degradation in Paratyphi A and Typhi, human-restricted serovars of Salmonella enterica that cause typhoid.</title>
        <authorList>
            <person name="McClelland M."/>
            <person name="Sanderson K.E."/>
            <person name="Clifton S.W."/>
            <person name="Latreille P."/>
            <person name="Porwollik S."/>
            <person name="Sabo A."/>
            <person name="Meyer R."/>
            <person name="Bieri T."/>
            <person name="Ozersky P."/>
            <person name="McLellan M."/>
            <person name="Harkins C.R."/>
            <person name="Wang C."/>
            <person name="Nguyen C."/>
            <person name="Berghoff A."/>
            <person name="Elliott G."/>
            <person name="Kohlberg S."/>
            <person name="Strong C."/>
            <person name="Du F."/>
            <person name="Carter J."/>
            <person name="Kremizki C."/>
            <person name="Layman D."/>
            <person name="Leonard S."/>
            <person name="Sun H."/>
            <person name="Fulton L."/>
            <person name="Nash W."/>
            <person name="Miner T."/>
            <person name="Minx P."/>
            <person name="Delehaunty K."/>
            <person name="Fronick C."/>
            <person name="Magrini V."/>
            <person name="Nhan M."/>
            <person name="Warren W."/>
            <person name="Florea L."/>
            <person name="Spieth J."/>
            <person name="Wilson R.K."/>
        </authorList>
    </citation>
    <scope>NUCLEOTIDE SEQUENCE [LARGE SCALE GENOMIC DNA]</scope>
    <source>
        <strain>ATCC 9150 / SARB42</strain>
    </source>
</reference>
<gene>
    <name evidence="2" type="primary">rplS</name>
    <name type="ordered locus">SPA2532</name>
</gene>
<keyword id="KW-0687">Ribonucleoprotein</keyword>
<keyword id="KW-0689">Ribosomal protein</keyword>